<keyword id="KW-0255">Endonuclease</keyword>
<keyword id="KW-0378">Hydrolase</keyword>
<keyword id="KW-0540">Nuclease</keyword>
<keyword id="KW-1185">Reference proteome</keyword>
<keyword id="KW-0819">tRNA processing</keyword>
<evidence type="ECO:0000255" key="1">
    <source>
        <dbReference type="HAMAP-Rule" id="MF_01078"/>
    </source>
</evidence>
<feature type="chain" id="PRO_1000064802" description="RNA-free ribonuclease P">
    <location>
        <begin position="1"/>
        <end position="235"/>
    </location>
</feature>
<reference key="1">
    <citation type="submission" date="2006-10" db="EMBL/GenBank/DDBJ databases">
        <title>Complete sequence of Methanosaeta thermophila PT.</title>
        <authorList>
            <consortium name="US DOE Joint Genome Institute"/>
            <person name="Copeland A."/>
            <person name="Lucas S."/>
            <person name="Lapidus A."/>
            <person name="Barry K."/>
            <person name="Detter J.C."/>
            <person name="Glavina del Rio T."/>
            <person name="Hammon N."/>
            <person name="Israni S."/>
            <person name="Pitluck S."/>
            <person name="Chain P."/>
            <person name="Malfatti S."/>
            <person name="Shin M."/>
            <person name="Vergez L."/>
            <person name="Schmutz J."/>
            <person name="Larimer F."/>
            <person name="Land M."/>
            <person name="Hauser L."/>
            <person name="Kyrpides N."/>
            <person name="Kim E."/>
            <person name="Smith K.S."/>
            <person name="Ingram-Smith C."/>
            <person name="Richardson P."/>
        </authorList>
    </citation>
    <scope>NUCLEOTIDE SEQUENCE [LARGE SCALE GENOMIC DNA]</scope>
    <source>
        <strain>DSM 6194 / JCM 14653 / NBRC 101360 / PT</strain>
    </source>
</reference>
<dbReference type="EC" id="3.1.26.5" evidence="1"/>
<dbReference type="EMBL" id="CP000477">
    <property type="protein sequence ID" value="ABK14726.1"/>
    <property type="molecule type" value="Genomic_DNA"/>
</dbReference>
<dbReference type="RefSeq" id="WP_011696121.1">
    <property type="nucleotide sequence ID" value="NC_008553.1"/>
</dbReference>
<dbReference type="SMR" id="A0B7Q2"/>
<dbReference type="STRING" id="349307.Mthe_0938"/>
<dbReference type="GeneID" id="4463331"/>
<dbReference type="KEGG" id="mtp:Mthe_0938"/>
<dbReference type="HOGENOM" id="CLU_109672_0_0_2"/>
<dbReference type="OrthoDB" id="95197at2157"/>
<dbReference type="Proteomes" id="UP000000674">
    <property type="component" value="Chromosome"/>
</dbReference>
<dbReference type="GO" id="GO:0004526">
    <property type="term" value="F:ribonuclease P activity"/>
    <property type="evidence" value="ECO:0007669"/>
    <property type="project" value="UniProtKB-UniRule"/>
</dbReference>
<dbReference type="GO" id="GO:0001682">
    <property type="term" value="P:tRNA 5'-leader removal"/>
    <property type="evidence" value="ECO:0007669"/>
    <property type="project" value="UniProtKB-UniRule"/>
</dbReference>
<dbReference type="CDD" id="cd18691">
    <property type="entry name" value="PIN_VapC-like"/>
    <property type="match status" value="1"/>
</dbReference>
<dbReference type="HAMAP" id="MF_01078">
    <property type="entry name" value="RNA_free_RNase_P"/>
    <property type="match status" value="1"/>
</dbReference>
<dbReference type="InterPro" id="IPR014856">
    <property type="entry name" value="RNA_free_RNase_P"/>
</dbReference>
<dbReference type="NCBIfam" id="NF003343">
    <property type="entry name" value="PRK04358.1-4"/>
    <property type="match status" value="1"/>
</dbReference>
<dbReference type="NCBIfam" id="TIGR03875">
    <property type="entry name" value="RNA_lig_partner"/>
    <property type="match status" value="1"/>
</dbReference>
<dbReference type="PANTHER" id="PTHR41173:SF1">
    <property type="entry name" value="RNA-FREE RIBONUCLEASE P"/>
    <property type="match status" value="1"/>
</dbReference>
<dbReference type="PANTHER" id="PTHR41173">
    <property type="entry name" value="UPF0278 PROTEIN TK1425"/>
    <property type="match status" value="1"/>
</dbReference>
<dbReference type="Pfam" id="PF08745">
    <property type="entry name" value="PIN_5"/>
    <property type="match status" value="1"/>
</dbReference>
<accession>A0B7Q2</accession>
<protein>
    <recommendedName>
        <fullName evidence="1">RNA-free ribonuclease P</fullName>
        <shortName evidence="1">RNA-free RNase P</shortName>
        <ecNumber evidence="1">3.1.26.5</ecNumber>
    </recommendedName>
    <alternativeName>
        <fullName evidence="1">Protein-only RNase P</fullName>
    </alternativeName>
</protein>
<gene>
    <name type="ordered locus">Mthe_0938</name>
</gene>
<comment type="function">
    <text evidence="1">RNA-free RNase P that catalyzes the removal of the 5'-leader sequence from pre-tRNA to produce the mature 5'-terminus.</text>
</comment>
<comment type="catalytic activity">
    <reaction evidence="1">
        <text>Endonucleolytic cleavage of RNA, removing 5'-extranucleotides from tRNA precursor.</text>
        <dbReference type="EC" id="3.1.26.5"/>
    </reaction>
</comment>
<comment type="similarity">
    <text evidence="1">Belongs to the HARP family.</text>
</comment>
<organism>
    <name type="scientific">Methanothrix thermoacetophila (strain DSM 6194 / JCM 14653 / NBRC 101360 / PT)</name>
    <name type="common">Methanosaeta thermophila</name>
    <dbReference type="NCBI Taxonomy" id="349307"/>
    <lineage>
        <taxon>Archaea</taxon>
        <taxon>Methanobacteriati</taxon>
        <taxon>Methanobacteriota</taxon>
        <taxon>Stenosarchaea group</taxon>
        <taxon>Methanomicrobia</taxon>
        <taxon>Methanotrichales</taxon>
        <taxon>Methanotrichaceae</taxon>
        <taxon>Methanothrix</taxon>
    </lineage>
</organism>
<sequence length="235" mass="27232">MLRQRFVFDTTALTDSQAWESEGCTTLCEGMSAILHRVAQARLHLGISCYVPYPSVYNEIRDFVRNNNCDIAILGKIDTWLVKKTPDRYRVKIPSKIFYEYVDYMRSRINKGMNVSEEAIWEAVSRCLSISATGEGREQMREEIEREVVGSIIRKFREKYRAALRYGILDSAPDIDVLLLAKDLDAAVVSQDLGIQRWAEQLGLRFMEARAFPQMVREYMSFVPLHTEELEDRMV</sequence>
<name>RFRNP_METTP</name>
<proteinExistence type="inferred from homology"/>